<proteinExistence type="inferred from homology"/>
<reference key="1">
    <citation type="submission" date="2008-01" db="EMBL/GenBank/DDBJ databases">
        <title>Complete sequence of Shewanella halifaxensis HAW-EB4.</title>
        <authorList>
            <consortium name="US DOE Joint Genome Institute"/>
            <person name="Copeland A."/>
            <person name="Lucas S."/>
            <person name="Lapidus A."/>
            <person name="Glavina del Rio T."/>
            <person name="Dalin E."/>
            <person name="Tice H."/>
            <person name="Bruce D."/>
            <person name="Goodwin L."/>
            <person name="Pitluck S."/>
            <person name="Sims D."/>
            <person name="Brettin T."/>
            <person name="Detter J.C."/>
            <person name="Han C."/>
            <person name="Kuske C.R."/>
            <person name="Schmutz J."/>
            <person name="Larimer F."/>
            <person name="Land M."/>
            <person name="Hauser L."/>
            <person name="Kyrpides N."/>
            <person name="Kim E."/>
            <person name="Zhao J.-S."/>
            <person name="Richardson P."/>
        </authorList>
    </citation>
    <scope>NUCLEOTIDE SEQUENCE [LARGE SCALE GENOMIC DNA]</scope>
    <source>
        <strain>HAW-EB4</strain>
    </source>
</reference>
<protein>
    <recommendedName>
        <fullName evidence="1">Dihydroorotate dehydrogenase (quinone)</fullName>
        <ecNumber evidence="1">1.3.5.2</ecNumber>
    </recommendedName>
    <alternativeName>
        <fullName evidence="1">DHOdehase</fullName>
        <shortName evidence="1">DHOD</shortName>
        <shortName evidence="1">DHODase</shortName>
    </alternativeName>
    <alternativeName>
        <fullName evidence="1">Dihydroorotate oxidase</fullName>
    </alternativeName>
</protein>
<name>PYRD_SHEHH</name>
<sequence length="339" mass="36529">MFYKIAQKFMFQMDPELAHNLAIGSLKSTGNSPLNCFYAQNIKPAPVTMMGLTFPNPVGLAAGMDKDGECIDAFHAMGFGHIEVGTVTPRPQPGNDKPRCFRLKPAKAIINRMGFNNKGVDNLVENLKAVKTNAMVGVNIGKNKDTPVEQGKDDYLICMDKVYPYAAYIAVNISSPNTPGLRSLQYGDLLDDLLGSLKQKQKELAEKHGKYVPIALKIAPDLSSEEIEKIAEALIKSEFDAAIATNTTLTRDGVSGLLNANEAGGLSGKPLNSLSTIVIKQLADCLKGKLPIIGVGGINAAEDALDKLDAGAEMVQIFSGFIYQGPKLIKDIVEAYRIK</sequence>
<evidence type="ECO:0000255" key="1">
    <source>
        <dbReference type="HAMAP-Rule" id="MF_00225"/>
    </source>
</evidence>
<gene>
    <name evidence="1" type="primary">pyrD</name>
    <name type="ordered locus">Shal_2356</name>
</gene>
<organism>
    <name type="scientific">Shewanella halifaxensis (strain HAW-EB4)</name>
    <dbReference type="NCBI Taxonomy" id="458817"/>
    <lineage>
        <taxon>Bacteria</taxon>
        <taxon>Pseudomonadati</taxon>
        <taxon>Pseudomonadota</taxon>
        <taxon>Gammaproteobacteria</taxon>
        <taxon>Alteromonadales</taxon>
        <taxon>Shewanellaceae</taxon>
        <taxon>Shewanella</taxon>
    </lineage>
</organism>
<accession>B0TIY0</accession>
<keyword id="KW-1003">Cell membrane</keyword>
<keyword id="KW-0285">Flavoprotein</keyword>
<keyword id="KW-0288">FMN</keyword>
<keyword id="KW-0472">Membrane</keyword>
<keyword id="KW-0560">Oxidoreductase</keyword>
<keyword id="KW-0665">Pyrimidine biosynthesis</keyword>
<dbReference type="EC" id="1.3.5.2" evidence="1"/>
<dbReference type="EMBL" id="CP000931">
    <property type="protein sequence ID" value="ABZ76915.1"/>
    <property type="molecule type" value="Genomic_DNA"/>
</dbReference>
<dbReference type="RefSeq" id="WP_012277443.1">
    <property type="nucleotide sequence ID" value="NC_010334.1"/>
</dbReference>
<dbReference type="SMR" id="B0TIY0"/>
<dbReference type="STRING" id="458817.Shal_2356"/>
<dbReference type="KEGG" id="shl:Shal_2356"/>
<dbReference type="eggNOG" id="COG0167">
    <property type="taxonomic scope" value="Bacteria"/>
</dbReference>
<dbReference type="HOGENOM" id="CLU_013640_2_0_6"/>
<dbReference type="OrthoDB" id="9802377at2"/>
<dbReference type="UniPathway" id="UPA00070">
    <property type="reaction ID" value="UER00946"/>
</dbReference>
<dbReference type="Proteomes" id="UP000001317">
    <property type="component" value="Chromosome"/>
</dbReference>
<dbReference type="GO" id="GO:0005737">
    <property type="term" value="C:cytoplasm"/>
    <property type="evidence" value="ECO:0007669"/>
    <property type="project" value="InterPro"/>
</dbReference>
<dbReference type="GO" id="GO:0005886">
    <property type="term" value="C:plasma membrane"/>
    <property type="evidence" value="ECO:0007669"/>
    <property type="project" value="UniProtKB-SubCell"/>
</dbReference>
<dbReference type="GO" id="GO:0106430">
    <property type="term" value="F:dihydroorotate dehydrogenase (quinone) activity"/>
    <property type="evidence" value="ECO:0007669"/>
    <property type="project" value="UniProtKB-EC"/>
</dbReference>
<dbReference type="GO" id="GO:0006207">
    <property type="term" value="P:'de novo' pyrimidine nucleobase biosynthetic process"/>
    <property type="evidence" value="ECO:0007669"/>
    <property type="project" value="InterPro"/>
</dbReference>
<dbReference type="GO" id="GO:0044205">
    <property type="term" value="P:'de novo' UMP biosynthetic process"/>
    <property type="evidence" value="ECO:0007669"/>
    <property type="project" value="UniProtKB-UniRule"/>
</dbReference>
<dbReference type="CDD" id="cd04738">
    <property type="entry name" value="DHOD_2_like"/>
    <property type="match status" value="1"/>
</dbReference>
<dbReference type="FunFam" id="3.20.20.70:FF:000028">
    <property type="entry name" value="Dihydroorotate dehydrogenase (quinone)"/>
    <property type="match status" value="1"/>
</dbReference>
<dbReference type="Gene3D" id="3.20.20.70">
    <property type="entry name" value="Aldolase class I"/>
    <property type="match status" value="1"/>
</dbReference>
<dbReference type="HAMAP" id="MF_00225">
    <property type="entry name" value="DHO_dh_type2"/>
    <property type="match status" value="1"/>
</dbReference>
<dbReference type="InterPro" id="IPR013785">
    <property type="entry name" value="Aldolase_TIM"/>
</dbReference>
<dbReference type="InterPro" id="IPR050074">
    <property type="entry name" value="DHO_dehydrogenase"/>
</dbReference>
<dbReference type="InterPro" id="IPR012135">
    <property type="entry name" value="Dihydroorotate_DH_1_2"/>
</dbReference>
<dbReference type="InterPro" id="IPR005719">
    <property type="entry name" value="Dihydroorotate_DH_2"/>
</dbReference>
<dbReference type="InterPro" id="IPR005720">
    <property type="entry name" value="Dihydroorotate_DH_cat"/>
</dbReference>
<dbReference type="InterPro" id="IPR001295">
    <property type="entry name" value="Dihydroorotate_DH_CS"/>
</dbReference>
<dbReference type="NCBIfam" id="NF003644">
    <property type="entry name" value="PRK05286.1-1"/>
    <property type="match status" value="1"/>
</dbReference>
<dbReference type="NCBIfam" id="NF003645">
    <property type="entry name" value="PRK05286.1-2"/>
    <property type="match status" value="1"/>
</dbReference>
<dbReference type="NCBIfam" id="NF003646">
    <property type="entry name" value="PRK05286.1-4"/>
    <property type="match status" value="1"/>
</dbReference>
<dbReference type="NCBIfam" id="NF003652">
    <property type="entry name" value="PRK05286.2-5"/>
    <property type="match status" value="1"/>
</dbReference>
<dbReference type="NCBIfam" id="TIGR01036">
    <property type="entry name" value="pyrD_sub2"/>
    <property type="match status" value="1"/>
</dbReference>
<dbReference type="PANTHER" id="PTHR48109:SF4">
    <property type="entry name" value="DIHYDROOROTATE DEHYDROGENASE (QUINONE), MITOCHONDRIAL"/>
    <property type="match status" value="1"/>
</dbReference>
<dbReference type="PANTHER" id="PTHR48109">
    <property type="entry name" value="DIHYDROOROTATE DEHYDROGENASE (QUINONE), MITOCHONDRIAL-RELATED"/>
    <property type="match status" value="1"/>
</dbReference>
<dbReference type="Pfam" id="PF01180">
    <property type="entry name" value="DHO_dh"/>
    <property type="match status" value="1"/>
</dbReference>
<dbReference type="PIRSF" id="PIRSF000164">
    <property type="entry name" value="DHO_oxidase"/>
    <property type="match status" value="1"/>
</dbReference>
<dbReference type="SUPFAM" id="SSF51395">
    <property type="entry name" value="FMN-linked oxidoreductases"/>
    <property type="match status" value="1"/>
</dbReference>
<dbReference type="PROSITE" id="PS00911">
    <property type="entry name" value="DHODEHASE_1"/>
    <property type="match status" value="1"/>
</dbReference>
<comment type="function">
    <text evidence="1">Catalyzes the conversion of dihydroorotate to orotate with quinone as electron acceptor.</text>
</comment>
<comment type="catalytic activity">
    <reaction evidence="1">
        <text>(S)-dihydroorotate + a quinone = orotate + a quinol</text>
        <dbReference type="Rhea" id="RHEA:30187"/>
        <dbReference type="ChEBI" id="CHEBI:24646"/>
        <dbReference type="ChEBI" id="CHEBI:30839"/>
        <dbReference type="ChEBI" id="CHEBI:30864"/>
        <dbReference type="ChEBI" id="CHEBI:132124"/>
        <dbReference type="EC" id="1.3.5.2"/>
    </reaction>
</comment>
<comment type="cofactor">
    <cofactor evidence="1">
        <name>FMN</name>
        <dbReference type="ChEBI" id="CHEBI:58210"/>
    </cofactor>
    <text evidence="1">Binds 1 FMN per subunit.</text>
</comment>
<comment type="pathway">
    <text evidence="1">Pyrimidine metabolism; UMP biosynthesis via de novo pathway; orotate from (S)-dihydroorotate (quinone route): step 1/1.</text>
</comment>
<comment type="subunit">
    <text evidence="1">Monomer.</text>
</comment>
<comment type="subcellular location">
    <subcellularLocation>
        <location evidence="1">Cell membrane</location>
        <topology evidence="1">Peripheral membrane protein</topology>
    </subcellularLocation>
</comment>
<comment type="similarity">
    <text evidence="1">Belongs to the dihydroorotate dehydrogenase family. Type 2 subfamily.</text>
</comment>
<feature type="chain" id="PRO_1000078167" description="Dihydroorotate dehydrogenase (quinone)">
    <location>
        <begin position="1"/>
        <end position="339"/>
    </location>
</feature>
<feature type="active site" description="Nucleophile" evidence="1">
    <location>
        <position position="175"/>
    </location>
</feature>
<feature type="binding site" evidence="1">
    <location>
        <begin position="62"/>
        <end position="66"/>
    </location>
    <ligand>
        <name>FMN</name>
        <dbReference type="ChEBI" id="CHEBI:58210"/>
    </ligand>
</feature>
<feature type="binding site" evidence="1">
    <location>
        <position position="66"/>
    </location>
    <ligand>
        <name>substrate</name>
    </ligand>
</feature>
<feature type="binding site" evidence="1">
    <location>
        <position position="86"/>
    </location>
    <ligand>
        <name>FMN</name>
        <dbReference type="ChEBI" id="CHEBI:58210"/>
    </ligand>
</feature>
<feature type="binding site" evidence="1">
    <location>
        <begin position="111"/>
        <end position="115"/>
    </location>
    <ligand>
        <name>substrate</name>
    </ligand>
</feature>
<feature type="binding site" evidence="1">
    <location>
        <position position="139"/>
    </location>
    <ligand>
        <name>FMN</name>
        <dbReference type="ChEBI" id="CHEBI:58210"/>
    </ligand>
</feature>
<feature type="binding site" evidence="1">
    <location>
        <position position="172"/>
    </location>
    <ligand>
        <name>FMN</name>
        <dbReference type="ChEBI" id="CHEBI:58210"/>
    </ligand>
</feature>
<feature type="binding site" evidence="1">
    <location>
        <position position="172"/>
    </location>
    <ligand>
        <name>substrate</name>
    </ligand>
</feature>
<feature type="binding site" evidence="1">
    <location>
        <position position="177"/>
    </location>
    <ligand>
        <name>substrate</name>
    </ligand>
</feature>
<feature type="binding site" evidence="1">
    <location>
        <position position="217"/>
    </location>
    <ligand>
        <name>FMN</name>
        <dbReference type="ChEBI" id="CHEBI:58210"/>
    </ligand>
</feature>
<feature type="binding site" evidence="1">
    <location>
        <position position="245"/>
    </location>
    <ligand>
        <name>FMN</name>
        <dbReference type="ChEBI" id="CHEBI:58210"/>
    </ligand>
</feature>
<feature type="binding site" evidence="1">
    <location>
        <begin position="246"/>
        <end position="247"/>
    </location>
    <ligand>
        <name>substrate</name>
    </ligand>
</feature>
<feature type="binding site" evidence="1">
    <location>
        <position position="268"/>
    </location>
    <ligand>
        <name>FMN</name>
        <dbReference type="ChEBI" id="CHEBI:58210"/>
    </ligand>
</feature>
<feature type="binding site" evidence="1">
    <location>
        <position position="297"/>
    </location>
    <ligand>
        <name>FMN</name>
        <dbReference type="ChEBI" id="CHEBI:58210"/>
    </ligand>
</feature>
<feature type="binding site" evidence="1">
    <location>
        <begin position="318"/>
        <end position="319"/>
    </location>
    <ligand>
        <name>FMN</name>
        <dbReference type="ChEBI" id="CHEBI:58210"/>
    </ligand>
</feature>